<evidence type="ECO:0000250" key="1"/>
<evidence type="ECO:0000255" key="2"/>
<evidence type="ECO:0000255" key="3">
    <source>
        <dbReference type="PROSITE-ProRule" id="PRU00114"/>
    </source>
</evidence>
<evidence type="ECO:0000256" key="4">
    <source>
        <dbReference type="SAM" id="MobiDB-lite"/>
    </source>
</evidence>
<evidence type="ECO:0000269" key="5">
    <source>
    </source>
</evidence>
<evidence type="ECO:0000269" key="6">
    <source>
    </source>
</evidence>
<evidence type="ECO:0000269" key="7">
    <source>
    </source>
</evidence>
<evidence type="ECO:0000269" key="8">
    <source>
    </source>
</evidence>
<evidence type="ECO:0000269" key="9">
    <source>
    </source>
</evidence>
<evidence type="ECO:0000269" key="10">
    <source>
    </source>
</evidence>
<evidence type="ECO:0000305" key="11"/>
<keyword id="KW-0903">Direct protein sequencing</keyword>
<keyword id="KW-1015">Disulfide bond</keyword>
<keyword id="KW-0325">Glycoprotein</keyword>
<keyword id="KW-0393">Immunoglobulin domain</keyword>
<keyword id="KW-0472">Membrane</keyword>
<keyword id="KW-1267">Proteomics identification</keyword>
<keyword id="KW-0675">Receptor</keyword>
<keyword id="KW-1185">Reference proteome</keyword>
<keyword id="KW-0677">Repeat</keyword>
<keyword id="KW-0732">Signal</keyword>
<keyword id="KW-0812">Transmembrane</keyword>
<keyword id="KW-1133">Transmembrane helix</keyword>
<gene>
    <name type="primary">FGFRL1</name>
    <name type="synonym">FGFR5</name>
    <name type="synonym">FHFR</name>
    <name type="ORF">UNQ480/PRO943</name>
</gene>
<name>FGRL1_HUMAN</name>
<protein>
    <recommendedName>
        <fullName>Fibroblast growth factor receptor-like 1</fullName>
        <shortName>FGF receptor-like protein 1</shortName>
    </recommendedName>
    <alternativeName>
        <fullName>FGF homologous factor receptor</fullName>
    </alternativeName>
    <alternativeName>
        <fullName>FGFR-like protein</fullName>
    </alternativeName>
    <alternativeName>
        <fullName>Fibroblast growth factor receptor 5</fullName>
        <shortName>FGFR-5</shortName>
    </alternativeName>
</protein>
<sequence length="504" mass="54537">MTPSPLLLLLLPPLLLGAFPPAAAARGPPKMADKVVPRQVARLGRTVRLQCPVEGDPPPLTMWTKDGRTIHSGWSRFRVLPQGLKVKQVEREDAGVYVCKATNGFGSLSVNYTLVVLDDISPGKESLGPDSSSGGQEDPASQQWARPRFTQPSKMRRRVIARPVGSSVRLKCVASGHPRPDITWMKDDQALTRPEAAEPRKKKWTLSLKNLRPEDSGKYTCRVSNRAGAINATYKVDVIQRTRSKPVLTGTHPVNTTVDFGGTTSFQCKVRSDVKPVIQWLKRVEYGAEGRHNSTIDVGGQKFVVLPTGDVWSRPDGSYLNKLLITRARQDDAGMYICLGANTMGYSFRSAFLTVLPDPKPPGPPVASSSSATSLPWPVVIGIPAGAVFILGTLLLWLCQAQKKPCTPAPAPPLPGHRPPGTARDRSGDKDLPSLAALSAGPGVGLCEEHGSPAAPQHLLGPGPVAGPKLYPKLYTDIHTHTHTHSHTHSHVEGKVHQHIHYQC</sequence>
<dbReference type="EMBL" id="AJ277437">
    <property type="protein sequence ID" value="CAC14171.1"/>
    <property type="molecule type" value="mRNA"/>
</dbReference>
<dbReference type="EMBL" id="AF279689">
    <property type="protein sequence ID" value="AAK26742.1"/>
    <property type="molecule type" value="mRNA"/>
</dbReference>
<dbReference type="EMBL" id="AF312678">
    <property type="protein sequence ID" value="AAK15273.1"/>
    <property type="molecule type" value="mRNA"/>
</dbReference>
<dbReference type="EMBL" id="AY358303">
    <property type="protein sequence ID" value="AAQ88670.1"/>
    <property type="molecule type" value="mRNA"/>
</dbReference>
<dbReference type="EMBL" id="AK314365">
    <property type="protein sequence ID" value="BAG36996.1"/>
    <property type="molecule type" value="mRNA"/>
</dbReference>
<dbReference type="EMBL" id="BC036769">
    <property type="protein sequence ID" value="AAH36769.1"/>
    <property type="molecule type" value="mRNA"/>
</dbReference>
<dbReference type="CCDS" id="CCDS3344.1"/>
<dbReference type="RefSeq" id="NP_001004356.1">
    <property type="nucleotide sequence ID" value="NM_001004356.3"/>
</dbReference>
<dbReference type="RefSeq" id="NP_001004358.1">
    <property type="nucleotide sequence ID" value="NM_001004358.1"/>
</dbReference>
<dbReference type="RefSeq" id="NP_001357225.1">
    <property type="nucleotide sequence ID" value="NM_001370296.1"/>
</dbReference>
<dbReference type="RefSeq" id="NP_068742.2">
    <property type="nucleotide sequence ID" value="NM_021923.3"/>
</dbReference>
<dbReference type="RefSeq" id="XP_011511788.1">
    <property type="nucleotide sequence ID" value="XM_011513486.1"/>
</dbReference>
<dbReference type="SMR" id="Q8N441"/>
<dbReference type="BioGRID" id="119806">
    <property type="interactions" value="66"/>
</dbReference>
<dbReference type="FunCoup" id="Q8N441">
    <property type="interactions" value="491"/>
</dbReference>
<dbReference type="IntAct" id="Q8N441">
    <property type="interactions" value="40"/>
</dbReference>
<dbReference type="MINT" id="Q8N441"/>
<dbReference type="STRING" id="9606.ENSP00000381498"/>
<dbReference type="TCDB" id="8.A.23.1.6">
    <property type="family name" value="the basigin (basigin) family"/>
</dbReference>
<dbReference type="GlyConnect" id="1240">
    <property type="glycosylation" value="2 N-Linked glycans (1 site)"/>
</dbReference>
<dbReference type="GlyCosmos" id="Q8N441">
    <property type="glycosylation" value="4 sites, 2 glycans"/>
</dbReference>
<dbReference type="GlyGen" id="Q8N441">
    <property type="glycosylation" value="4 sites, 5 N-linked glycans (3 sites)"/>
</dbReference>
<dbReference type="iPTMnet" id="Q8N441"/>
<dbReference type="PhosphoSitePlus" id="Q8N441"/>
<dbReference type="BioMuta" id="FGFRL1"/>
<dbReference type="DMDM" id="68052359"/>
<dbReference type="jPOST" id="Q8N441"/>
<dbReference type="MassIVE" id="Q8N441"/>
<dbReference type="PaxDb" id="9606-ENSP00000381498"/>
<dbReference type="PeptideAtlas" id="Q8N441"/>
<dbReference type="ProteomicsDB" id="71879"/>
<dbReference type="Pumba" id="Q8N441"/>
<dbReference type="Antibodypedia" id="22198">
    <property type="antibodies" value="347 antibodies from 32 providers"/>
</dbReference>
<dbReference type="DNASU" id="53834"/>
<dbReference type="Ensembl" id="ENST00000264748.6">
    <property type="protein sequence ID" value="ENSP00000264748.6"/>
    <property type="gene ID" value="ENSG00000127418.15"/>
</dbReference>
<dbReference type="Ensembl" id="ENST00000398484.6">
    <property type="protein sequence ID" value="ENSP00000381498.2"/>
    <property type="gene ID" value="ENSG00000127418.15"/>
</dbReference>
<dbReference type="Ensembl" id="ENST00000504138.5">
    <property type="protein sequence ID" value="ENSP00000423091.1"/>
    <property type="gene ID" value="ENSG00000127418.15"/>
</dbReference>
<dbReference type="Ensembl" id="ENST00000510644.6">
    <property type="protein sequence ID" value="ENSP00000425025.1"/>
    <property type="gene ID" value="ENSG00000127418.15"/>
</dbReference>
<dbReference type="GeneID" id="53834"/>
<dbReference type="KEGG" id="hsa:53834"/>
<dbReference type="MANE-Select" id="ENST00000510644.6">
    <property type="protein sequence ID" value="ENSP00000425025.1"/>
    <property type="RefSeq nucleotide sequence ID" value="NM_001004356.3"/>
    <property type="RefSeq protein sequence ID" value="NP_001004356.1"/>
</dbReference>
<dbReference type="UCSC" id="uc003gcf.4">
    <property type="organism name" value="human"/>
</dbReference>
<dbReference type="AGR" id="HGNC:3693"/>
<dbReference type="CTD" id="53834"/>
<dbReference type="DisGeNET" id="53834"/>
<dbReference type="GeneCards" id="FGFRL1"/>
<dbReference type="HGNC" id="HGNC:3693">
    <property type="gene designation" value="FGFRL1"/>
</dbReference>
<dbReference type="HPA" id="ENSG00000127418">
    <property type="expression patterns" value="Low tissue specificity"/>
</dbReference>
<dbReference type="MalaCards" id="FGFRL1"/>
<dbReference type="MIM" id="605830">
    <property type="type" value="gene"/>
</dbReference>
<dbReference type="neXtProt" id="NX_Q8N441"/>
<dbReference type="OpenTargets" id="ENSG00000127418"/>
<dbReference type="PharmGKB" id="PA28132"/>
<dbReference type="VEuPathDB" id="HostDB:ENSG00000127418"/>
<dbReference type="eggNOG" id="KOG0200">
    <property type="taxonomic scope" value="Eukaryota"/>
</dbReference>
<dbReference type="GeneTree" id="ENSGT00940000156736"/>
<dbReference type="HOGENOM" id="CLU_038830_1_0_1"/>
<dbReference type="InParanoid" id="Q8N441"/>
<dbReference type="OMA" id="LIHANNM"/>
<dbReference type="OrthoDB" id="6244905at2759"/>
<dbReference type="PAN-GO" id="Q8N441">
    <property type="GO annotations" value="3 GO annotations based on evolutionary models"/>
</dbReference>
<dbReference type="PhylomeDB" id="Q8N441"/>
<dbReference type="PathwayCommons" id="Q8N441"/>
<dbReference type="Reactome" id="R-HSA-5658623">
    <property type="pathway name" value="FGFRL1 modulation of FGFR1 signaling"/>
</dbReference>
<dbReference type="SignaLink" id="Q8N441"/>
<dbReference type="BioGRID-ORCS" id="53834">
    <property type="hits" value="15 hits in 1160 CRISPR screens"/>
</dbReference>
<dbReference type="ChiTaRS" id="FGFRL1">
    <property type="organism name" value="human"/>
</dbReference>
<dbReference type="GeneWiki" id="FGFRL1"/>
<dbReference type="GenomeRNAi" id="53834"/>
<dbReference type="Pharos" id="Q8N441">
    <property type="development level" value="Tbio"/>
</dbReference>
<dbReference type="PRO" id="PR:Q8N441"/>
<dbReference type="Proteomes" id="UP000005640">
    <property type="component" value="Chromosome 4"/>
</dbReference>
<dbReference type="RNAct" id="Q8N441">
    <property type="molecule type" value="protein"/>
</dbReference>
<dbReference type="Bgee" id="ENSG00000127418">
    <property type="expression patterns" value="Expressed in right uterine tube and 115 other cell types or tissues"/>
</dbReference>
<dbReference type="ExpressionAtlas" id="Q8N441">
    <property type="expression patterns" value="baseline and differential"/>
</dbReference>
<dbReference type="GO" id="GO:0044291">
    <property type="term" value="C:cell-cell contact zone"/>
    <property type="evidence" value="ECO:0000314"/>
    <property type="project" value="UniProtKB"/>
</dbReference>
<dbReference type="GO" id="GO:0005794">
    <property type="term" value="C:Golgi apparatus"/>
    <property type="evidence" value="ECO:0000314"/>
    <property type="project" value="UniProtKB"/>
</dbReference>
<dbReference type="GO" id="GO:0005886">
    <property type="term" value="C:plasma membrane"/>
    <property type="evidence" value="ECO:0000314"/>
    <property type="project" value="UniProtKB"/>
</dbReference>
<dbReference type="GO" id="GO:0030133">
    <property type="term" value="C:transport vesicle"/>
    <property type="evidence" value="ECO:0000314"/>
    <property type="project" value="UniProtKB"/>
</dbReference>
<dbReference type="GO" id="GO:0017134">
    <property type="term" value="F:fibroblast growth factor binding"/>
    <property type="evidence" value="ECO:0000318"/>
    <property type="project" value="GO_Central"/>
</dbReference>
<dbReference type="GO" id="GO:0005007">
    <property type="term" value="F:fibroblast growth factor receptor activity"/>
    <property type="evidence" value="ECO:0000314"/>
    <property type="project" value="UniProtKB"/>
</dbReference>
<dbReference type="GO" id="GO:0008201">
    <property type="term" value="F:heparin binding"/>
    <property type="evidence" value="ECO:0000314"/>
    <property type="project" value="UniProtKB"/>
</dbReference>
<dbReference type="GO" id="GO:0042802">
    <property type="term" value="F:identical protein binding"/>
    <property type="evidence" value="ECO:0000353"/>
    <property type="project" value="UniProtKB"/>
</dbReference>
<dbReference type="GO" id="GO:0098742">
    <property type="term" value="P:cell-cell adhesion via plasma-membrane adhesion molecules"/>
    <property type="evidence" value="ECO:0000315"/>
    <property type="project" value="UniProtKB"/>
</dbReference>
<dbReference type="GO" id="GO:0060539">
    <property type="term" value="P:diaphragm development"/>
    <property type="evidence" value="ECO:0007669"/>
    <property type="project" value="Ensembl"/>
</dbReference>
<dbReference type="GO" id="GO:0003179">
    <property type="term" value="P:heart valve morphogenesis"/>
    <property type="evidence" value="ECO:0007669"/>
    <property type="project" value="Ensembl"/>
</dbReference>
<dbReference type="GO" id="GO:0008285">
    <property type="term" value="P:negative regulation of cell population proliferation"/>
    <property type="evidence" value="ECO:0007669"/>
    <property type="project" value="Ensembl"/>
</dbReference>
<dbReference type="GO" id="GO:0001501">
    <property type="term" value="P:skeletal system development"/>
    <property type="evidence" value="ECO:0007669"/>
    <property type="project" value="Ensembl"/>
</dbReference>
<dbReference type="GO" id="GO:0060412">
    <property type="term" value="P:ventricular septum morphogenesis"/>
    <property type="evidence" value="ECO:0007669"/>
    <property type="project" value="Ensembl"/>
</dbReference>
<dbReference type="CDD" id="cd05856">
    <property type="entry name" value="IgI_2_FGFRL1-like"/>
    <property type="match status" value="1"/>
</dbReference>
<dbReference type="FunFam" id="2.60.40.10:FF:000016">
    <property type="entry name" value="Fibroblast growth factor receptor"/>
    <property type="match status" value="1"/>
</dbReference>
<dbReference type="FunFam" id="2.60.40.10:FF:000246">
    <property type="entry name" value="Fibroblast growth factor receptor like 1"/>
    <property type="match status" value="1"/>
</dbReference>
<dbReference type="FunFam" id="2.60.40.10:FF:000593">
    <property type="entry name" value="Fibroblast growth factor receptor-like 1"/>
    <property type="match status" value="1"/>
</dbReference>
<dbReference type="Gene3D" id="2.60.40.10">
    <property type="entry name" value="Immunoglobulins"/>
    <property type="match status" value="3"/>
</dbReference>
<dbReference type="InterPro" id="IPR052615">
    <property type="entry name" value="FGFRL"/>
</dbReference>
<dbReference type="InterPro" id="IPR007110">
    <property type="entry name" value="Ig-like_dom"/>
</dbReference>
<dbReference type="InterPro" id="IPR036179">
    <property type="entry name" value="Ig-like_dom_sf"/>
</dbReference>
<dbReference type="InterPro" id="IPR013783">
    <property type="entry name" value="Ig-like_fold"/>
</dbReference>
<dbReference type="InterPro" id="IPR013098">
    <property type="entry name" value="Ig_I-set"/>
</dbReference>
<dbReference type="InterPro" id="IPR003599">
    <property type="entry name" value="Ig_sub"/>
</dbReference>
<dbReference type="InterPro" id="IPR003598">
    <property type="entry name" value="Ig_sub2"/>
</dbReference>
<dbReference type="PANTHER" id="PTHR19890">
    <property type="entry name" value="FIBROBLAST GROWTH FACTOR RECEPTOR"/>
    <property type="match status" value="1"/>
</dbReference>
<dbReference type="PANTHER" id="PTHR19890:SF10">
    <property type="entry name" value="FIBROBLAST GROWTH FACTOR RECEPTOR-LIKE 1"/>
    <property type="match status" value="1"/>
</dbReference>
<dbReference type="Pfam" id="PF07679">
    <property type="entry name" value="I-set"/>
    <property type="match status" value="2"/>
</dbReference>
<dbReference type="Pfam" id="PF13927">
    <property type="entry name" value="Ig_3"/>
    <property type="match status" value="1"/>
</dbReference>
<dbReference type="SMART" id="SM00409">
    <property type="entry name" value="IG"/>
    <property type="match status" value="3"/>
</dbReference>
<dbReference type="SMART" id="SM00408">
    <property type="entry name" value="IGc2"/>
    <property type="match status" value="3"/>
</dbReference>
<dbReference type="SUPFAM" id="SSF48726">
    <property type="entry name" value="Immunoglobulin"/>
    <property type="match status" value="3"/>
</dbReference>
<dbReference type="PROSITE" id="PS50835">
    <property type="entry name" value="IG_LIKE"/>
    <property type="match status" value="3"/>
</dbReference>
<comment type="function">
    <text evidence="1">Has a negative effect on cell proliferation.</text>
</comment>
<comment type="subunit">
    <text evidence="1">Interacts with FGF2 with a low affinity.</text>
</comment>
<comment type="subcellular location">
    <subcellularLocation>
        <location evidence="8">Membrane</location>
        <topology evidence="8">Single-pass type I membrane protein</topology>
    </subcellularLocation>
    <text>Predominantly localized in the plasma membrane but also detected in the Golgi and in secretory vesicles.</text>
</comment>
<comment type="tissue specificity">
    <text evidence="5 6 7">Expressed preferentially in cartilaginous tissues and pancreas. Highly expressed in the liver, kidney, heart, brain and skeletal muscle. Weakly expressed in the lung, small intestine and spleen.</text>
</comment>
<feature type="signal peptide" evidence="9">
    <location>
        <begin position="1"/>
        <end position="24"/>
    </location>
</feature>
<feature type="chain" id="PRO_0000021250" description="Fibroblast growth factor receptor-like 1">
    <location>
        <begin position="25"/>
        <end position="504"/>
    </location>
</feature>
<feature type="topological domain" description="Extracellular" evidence="2">
    <location>
        <begin position="25"/>
        <end position="378"/>
    </location>
</feature>
<feature type="transmembrane region" description="Helical" evidence="2">
    <location>
        <begin position="379"/>
        <end position="399"/>
    </location>
</feature>
<feature type="topological domain" description="Cytoplasmic" evidence="2">
    <location>
        <begin position="400"/>
        <end position="504"/>
    </location>
</feature>
<feature type="domain" description="Ig-like C2-type 1">
    <location>
        <begin position="29"/>
        <end position="115"/>
    </location>
</feature>
<feature type="domain" description="Ig-like C2-type 2">
    <location>
        <begin position="147"/>
        <end position="237"/>
    </location>
</feature>
<feature type="domain" description="Ig-like C2-type 3">
    <location>
        <begin position="246"/>
        <end position="354"/>
    </location>
</feature>
<feature type="region of interest" description="Disordered" evidence="4">
    <location>
        <begin position="123"/>
        <end position="155"/>
    </location>
</feature>
<feature type="region of interest" description="Disordered" evidence="4">
    <location>
        <begin position="407"/>
        <end position="435"/>
    </location>
</feature>
<feature type="compositionally biased region" description="Polar residues" evidence="4">
    <location>
        <begin position="129"/>
        <end position="144"/>
    </location>
</feature>
<feature type="compositionally biased region" description="Pro residues" evidence="4">
    <location>
        <begin position="407"/>
        <end position="418"/>
    </location>
</feature>
<feature type="compositionally biased region" description="Basic and acidic residues" evidence="4">
    <location>
        <begin position="423"/>
        <end position="432"/>
    </location>
</feature>
<feature type="glycosylation site" description="N-linked (GlcNAc...) asparagine" evidence="2">
    <location>
        <position position="111"/>
    </location>
</feature>
<feature type="glycosylation site" description="N-linked (GlcNAc...) asparagine" evidence="2">
    <location>
        <position position="231"/>
    </location>
</feature>
<feature type="glycosylation site" description="N-linked (GlcNAc...) asparagine" evidence="2">
    <location>
        <position position="255"/>
    </location>
</feature>
<feature type="glycosylation site" description="N-linked (GlcNAc...) asparagine" evidence="2">
    <location>
        <position position="293"/>
    </location>
</feature>
<feature type="disulfide bond" evidence="3">
    <location>
        <begin position="51"/>
        <end position="99"/>
    </location>
</feature>
<feature type="disulfide bond" evidence="3">
    <location>
        <begin position="172"/>
        <end position="221"/>
    </location>
</feature>
<feature type="disulfide bond" evidence="3">
    <location>
        <begin position="268"/>
        <end position="338"/>
    </location>
</feature>
<feature type="sequence variant" id="VAR_022642" description="In dbSNP:rs4647930." evidence="5 6 10">
    <original>P</original>
    <variation>Q</variation>
    <location>
        <position position="362"/>
    </location>
</feature>
<feature type="sequence variant" id="VAR_024316" description="In dbSNP:rs4647932.">
    <original>P</original>
    <variation>L</variation>
    <location>
        <position position="464"/>
    </location>
</feature>
<feature type="sequence conflict" description="In Ref. 3; AAK15273." evidence="11" ref="3">
    <location>
        <begin position="374"/>
        <end position="380"/>
    </location>
</feature>
<organism>
    <name type="scientific">Homo sapiens</name>
    <name type="common">Human</name>
    <dbReference type="NCBI Taxonomy" id="9606"/>
    <lineage>
        <taxon>Eukaryota</taxon>
        <taxon>Metazoa</taxon>
        <taxon>Chordata</taxon>
        <taxon>Craniata</taxon>
        <taxon>Vertebrata</taxon>
        <taxon>Euteleostomi</taxon>
        <taxon>Mammalia</taxon>
        <taxon>Eutheria</taxon>
        <taxon>Euarchontoglires</taxon>
        <taxon>Primates</taxon>
        <taxon>Haplorrhini</taxon>
        <taxon>Catarrhini</taxon>
        <taxon>Hominidae</taxon>
        <taxon>Homo</taxon>
    </lineage>
</organism>
<proteinExistence type="evidence at protein level"/>
<accession>Q8N441</accession>
<accession>B2RAU9</accession>
<accession>Q6PJN1</accession>
<accession>Q9BXN7</accession>
<accession>Q9H4D7</accession>
<reference key="1">
    <citation type="journal article" date="2000" name="Genomics">
        <title>Characterization of a novel protein (FGFRL1) from human cartilage related to FGF receptors.</title>
        <authorList>
            <person name="Wiedemann M."/>
            <person name="Trueb B."/>
        </authorList>
    </citation>
    <scope>NUCLEOTIDE SEQUENCE [MRNA]</scope>
    <scope>TISSUE SPECIFICITY</scope>
    <scope>VARIANT GLN-362</scope>
    <source>
        <tissue>Cartilage</tissue>
    </source>
</reference>
<reference key="2">
    <citation type="journal article" date="2001" name="Biochim. Biophys. Acta">
        <title>A novel fibroblast growth factor receptor-5 preferentially expressed in the pancreas.</title>
        <authorList>
            <person name="Kim I."/>
            <person name="Moon S.-O."/>
            <person name="Yu K.-H."/>
            <person name="Kim U.-H."/>
            <person name="Koh G.Y."/>
        </authorList>
    </citation>
    <scope>NUCLEOTIDE SEQUENCE [MRNA]</scope>
    <scope>TISSUE SPECIFICITY</scope>
    <scope>VARIANT GLN-362</scope>
</reference>
<reference key="3">
    <citation type="submission" date="2000-10" db="EMBL/GenBank/DDBJ databases">
        <title>FHFR, a novel fibroblast growth factor receptor that uniquely binds the fibroblast growth factor homologous factors.</title>
        <authorList>
            <person name="Aggarwal S."/>
            <person name="Xie M.-H."/>
            <person name="Foster J."/>
            <person name="Frantz G."/>
            <person name="Stinson J."/>
            <person name="Corpuz R.T."/>
            <person name="Simmons L."/>
            <person name="Hillan K."/>
            <person name="Yansura D.G."/>
            <person name="Vandlen R.L."/>
            <person name="Goddard A.D."/>
            <person name="Gurney A.L."/>
        </authorList>
    </citation>
    <scope>NUCLEOTIDE SEQUENCE [MRNA]</scope>
</reference>
<reference key="4">
    <citation type="journal article" date="2003" name="Genome Res.">
        <title>The secreted protein discovery initiative (SPDI), a large-scale effort to identify novel human secreted and transmembrane proteins: a bioinformatics assessment.</title>
        <authorList>
            <person name="Clark H.F."/>
            <person name="Gurney A.L."/>
            <person name="Abaya E."/>
            <person name="Baker K."/>
            <person name="Baldwin D.T."/>
            <person name="Brush J."/>
            <person name="Chen J."/>
            <person name="Chow B."/>
            <person name="Chui C."/>
            <person name="Crowley C."/>
            <person name="Currell B."/>
            <person name="Deuel B."/>
            <person name="Dowd P."/>
            <person name="Eaton D."/>
            <person name="Foster J.S."/>
            <person name="Grimaldi C."/>
            <person name="Gu Q."/>
            <person name="Hass P.E."/>
            <person name="Heldens S."/>
            <person name="Huang A."/>
            <person name="Kim H.S."/>
            <person name="Klimowski L."/>
            <person name="Jin Y."/>
            <person name="Johnson S."/>
            <person name="Lee J."/>
            <person name="Lewis L."/>
            <person name="Liao D."/>
            <person name="Mark M.R."/>
            <person name="Robbie E."/>
            <person name="Sanchez C."/>
            <person name="Schoenfeld J."/>
            <person name="Seshagiri S."/>
            <person name="Simmons L."/>
            <person name="Singh J."/>
            <person name="Smith V."/>
            <person name="Stinson J."/>
            <person name="Vagts A."/>
            <person name="Vandlen R.L."/>
            <person name="Watanabe C."/>
            <person name="Wieand D."/>
            <person name="Woods K."/>
            <person name="Xie M.-H."/>
            <person name="Yansura D.G."/>
            <person name="Yi S."/>
            <person name="Yu G."/>
            <person name="Yuan J."/>
            <person name="Zhang M."/>
            <person name="Zhang Z."/>
            <person name="Goddard A.D."/>
            <person name="Wood W.I."/>
            <person name="Godowski P.J."/>
            <person name="Gray A.M."/>
        </authorList>
    </citation>
    <scope>NUCLEOTIDE SEQUENCE [LARGE SCALE MRNA]</scope>
</reference>
<reference key="5">
    <citation type="journal article" date="2004" name="Nat. Genet.">
        <title>Complete sequencing and characterization of 21,243 full-length human cDNAs.</title>
        <authorList>
            <person name="Ota T."/>
            <person name="Suzuki Y."/>
            <person name="Nishikawa T."/>
            <person name="Otsuki T."/>
            <person name="Sugiyama T."/>
            <person name="Irie R."/>
            <person name="Wakamatsu A."/>
            <person name="Hayashi K."/>
            <person name="Sato H."/>
            <person name="Nagai K."/>
            <person name="Kimura K."/>
            <person name="Makita H."/>
            <person name="Sekine M."/>
            <person name="Obayashi M."/>
            <person name="Nishi T."/>
            <person name="Shibahara T."/>
            <person name="Tanaka T."/>
            <person name="Ishii S."/>
            <person name="Yamamoto J."/>
            <person name="Saito K."/>
            <person name="Kawai Y."/>
            <person name="Isono Y."/>
            <person name="Nakamura Y."/>
            <person name="Nagahari K."/>
            <person name="Murakami K."/>
            <person name="Yasuda T."/>
            <person name="Iwayanagi T."/>
            <person name="Wagatsuma M."/>
            <person name="Shiratori A."/>
            <person name="Sudo H."/>
            <person name="Hosoiri T."/>
            <person name="Kaku Y."/>
            <person name="Kodaira H."/>
            <person name="Kondo H."/>
            <person name="Sugawara M."/>
            <person name="Takahashi M."/>
            <person name="Kanda K."/>
            <person name="Yokoi T."/>
            <person name="Furuya T."/>
            <person name="Kikkawa E."/>
            <person name="Omura Y."/>
            <person name="Abe K."/>
            <person name="Kamihara K."/>
            <person name="Katsuta N."/>
            <person name="Sato K."/>
            <person name="Tanikawa M."/>
            <person name="Yamazaki M."/>
            <person name="Ninomiya K."/>
            <person name="Ishibashi T."/>
            <person name="Yamashita H."/>
            <person name="Murakawa K."/>
            <person name="Fujimori K."/>
            <person name="Tanai H."/>
            <person name="Kimata M."/>
            <person name="Watanabe M."/>
            <person name="Hiraoka S."/>
            <person name="Chiba Y."/>
            <person name="Ishida S."/>
            <person name="Ono Y."/>
            <person name="Takiguchi S."/>
            <person name="Watanabe S."/>
            <person name="Yosida M."/>
            <person name="Hotuta T."/>
            <person name="Kusano J."/>
            <person name="Kanehori K."/>
            <person name="Takahashi-Fujii A."/>
            <person name="Hara H."/>
            <person name="Tanase T.-O."/>
            <person name="Nomura Y."/>
            <person name="Togiya S."/>
            <person name="Komai F."/>
            <person name="Hara R."/>
            <person name="Takeuchi K."/>
            <person name="Arita M."/>
            <person name="Imose N."/>
            <person name="Musashino K."/>
            <person name="Yuuki H."/>
            <person name="Oshima A."/>
            <person name="Sasaki N."/>
            <person name="Aotsuka S."/>
            <person name="Yoshikawa Y."/>
            <person name="Matsunawa H."/>
            <person name="Ichihara T."/>
            <person name="Shiohata N."/>
            <person name="Sano S."/>
            <person name="Moriya S."/>
            <person name="Momiyama H."/>
            <person name="Satoh N."/>
            <person name="Takami S."/>
            <person name="Terashima Y."/>
            <person name="Suzuki O."/>
            <person name="Nakagawa S."/>
            <person name="Senoh A."/>
            <person name="Mizoguchi H."/>
            <person name="Goto Y."/>
            <person name="Shimizu F."/>
            <person name="Wakebe H."/>
            <person name="Hishigaki H."/>
            <person name="Watanabe T."/>
            <person name="Sugiyama A."/>
            <person name="Takemoto M."/>
            <person name="Kawakami B."/>
            <person name="Yamazaki M."/>
            <person name="Watanabe K."/>
            <person name="Kumagai A."/>
            <person name="Itakura S."/>
            <person name="Fukuzumi Y."/>
            <person name="Fujimori Y."/>
            <person name="Komiyama M."/>
            <person name="Tashiro H."/>
            <person name="Tanigami A."/>
            <person name="Fujiwara T."/>
            <person name="Ono T."/>
            <person name="Yamada K."/>
            <person name="Fujii Y."/>
            <person name="Ozaki K."/>
            <person name="Hirao M."/>
            <person name="Ohmori Y."/>
            <person name="Kawabata A."/>
            <person name="Hikiji T."/>
            <person name="Kobatake N."/>
            <person name="Inagaki H."/>
            <person name="Ikema Y."/>
            <person name="Okamoto S."/>
            <person name="Okitani R."/>
            <person name="Kawakami T."/>
            <person name="Noguchi S."/>
            <person name="Itoh T."/>
            <person name="Shigeta K."/>
            <person name="Senba T."/>
            <person name="Matsumura K."/>
            <person name="Nakajima Y."/>
            <person name="Mizuno T."/>
            <person name="Morinaga M."/>
            <person name="Sasaki M."/>
            <person name="Togashi T."/>
            <person name="Oyama M."/>
            <person name="Hata H."/>
            <person name="Watanabe M."/>
            <person name="Komatsu T."/>
            <person name="Mizushima-Sugano J."/>
            <person name="Satoh T."/>
            <person name="Shirai Y."/>
            <person name="Takahashi Y."/>
            <person name="Nakagawa K."/>
            <person name="Okumura K."/>
            <person name="Nagase T."/>
            <person name="Nomura N."/>
            <person name="Kikuchi H."/>
            <person name="Masuho Y."/>
            <person name="Yamashita R."/>
            <person name="Nakai K."/>
            <person name="Yada T."/>
            <person name="Nakamura Y."/>
            <person name="Ohara O."/>
            <person name="Isogai T."/>
            <person name="Sugano S."/>
        </authorList>
    </citation>
    <scope>NUCLEOTIDE SEQUENCE [LARGE SCALE MRNA]</scope>
    <source>
        <tissue>Brain</tissue>
    </source>
</reference>
<reference key="6">
    <citation type="journal article" date="2004" name="Genome Res.">
        <title>The status, quality, and expansion of the NIH full-length cDNA project: the Mammalian Gene Collection (MGC).</title>
        <authorList>
            <consortium name="The MGC Project Team"/>
        </authorList>
    </citation>
    <scope>NUCLEOTIDE SEQUENCE [LARGE SCALE MRNA]</scope>
    <scope>VARIANT GLN-362</scope>
    <source>
        <tissue>Brain</tissue>
    </source>
</reference>
<reference key="7">
    <citation type="journal article" date="2004" name="Protein Sci.">
        <title>Signal peptide prediction based on analysis of experimentally verified cleavage sites.</title>
        <authorList>
            <person name="Zhang Z."/>
            <person name="Henzel W.J."/>
        </authorList>
    </citation>
    <scope>PROTEIN SEQUENCE OF 25-39</scope>
</reference>
<reference key="8">
    <citation type="journal article" date="2001" name="Gene">
        <title>Identification of a new fibroblast growth factor receptor, FGFR5.</title>
        <authorList>
            <person name="Sleeman M."/>
            <person name="Fraser J."/>
            <person name="McDonald M."/>
            <person name="Yuan S."/>
            <person name="White D."/>
            <person name="Grandison P."/>
            <person name="Kumble K."/>
            <person name="Watson J.D."/>
            <person name="Murison J.G."/>
        </authorList>
    </citation>
    <scope>TISSUE SPECIFICITY</scope>
</reference>
<reference key="9">
    <citation type="journal article" date="2003" name="J. Biol. Chem.">
        <title>Characterization of FGFRL1, a novel fibroblast growth factor (FGF) receptor preferentially expressed in skeletal tissues.</title>
        <authorList>
            <person name="Trueb B."/>
            <person name="Zhuang L."/>
            <person name="Taeschler S."/>
            <person name="Wiedemann M."/>
        </authorList>
    </citation>
    <scope>SUBCELLULAR LOCATION</scope>
    <source>
        <tissue>Cartilage</tissue>
    </source>
</reference>